<comment type="function">
    <text evidence="1">Catalyzes the reduction of the glycolytic intermediate dihydroxyacetone phosphate (DHAP) to sn-glycerol 3-phosphate (G3P), the key precursor for phospholipid synthesis.</text>
</comment>
<comment type="catalytic activity">
    <reaction evidence="1">
        <text>sn-glycerol 3-phosphate + NAD(+) = dihydroxyacetone phosphate + NADH + H(+)</text>
        <dbReference type="Rhea" id="RHEA:11092"/>
        <dbReference type="ChEBI" id="CHEBI:15378"/>
        <dbReference type="ChEBI" id="CHEBI:57540"/>
        <dbReference type="ChEBI" id="CHEBI:57597"/>
        <dbReference type="ChEBI" id="CHEBI:57642"/>
        <dbReference type="ChEBI" id="CHEBI:57945"/>
        <dbReference type="EC" id="1.1.1.94"/>
    </reaction>
    <physiologicalReaction direction="right-to-left" evidence="1">
        <dbReference type="Rhea" id="RHEA:11094"/>
    </physiologicalReaction>
</comment>
<comment type="catalytic activity">
    <reaction evidence="1">
        <text>sn-glycerol 3-phosphate + NADP(+) = dihydroxyacetone phosphate + NADPH + H(+)</text>
        <dbReference type="Rhea" id="RHEA:11096"/>
        <dbReference type="ChEBI" id="CHEBI:15378"/>
        <dbReference type="ChEBI" id="CHEBI:57597"/>
        <dbReference type="ChEBI" id="CHEBI:57642"/>
        <dbReference type="ChEBI" id="CHEBI:57783"/>
        <dbReference type="ChEBI" id="CHEBI:58349"/>
        <dbReference type="EC" id="1.1.1.94"/>
    </reaction>
    <physiologicalReaction direction="right-to-left" evidence="1">
        <dbReference type="Rhea" id="RHEA:11098"/>
    </physiologicalReaction>
</comment>
<comment type="pathway">
    <text evidence="1">Membrane lipid metabolism; glycerophospholipid metabolism.</text>
</comment>
<comment type="subcellular location">
    <subcellularLocation>
        <location evidence="1">Cytoplasm</location>
    </subcellularLocation>
</comment>
<comment type="similarity">
    <text evidence="1">Belongs to the NAD-dependent glycerol-3-phosphate dehydrogenase family.</text>
</comment>
<gene>
    <name evidence="1" type="primary">gpsA</name>
    <name type="ordered locus">OCAR_4328</name>
    <name type="ordered locus">OCA5_c01970</name>
</gene>
<feature type="chain" id="PRO_1000123167" description="Glycerol-3-phosphate dehydrogenase [NAD(P)+]">
    <location>
        <begin position="1"/>
        <end position="325"/>
    </location>
</feature>
<feature type="active site" description="Proton acceptor" evidence="1">
    <location>
        <position position="190"/>
    </location>
</feature>
<feature type="binding site" evidence="1">
    <location>
        <position position="15"/>
    </location>
    <ligand>
        <name>NADPH</name>
        <dbReference type="ChEBI" id="CHEBI:57783"/>
    </ligand>
</feature>
<feature type="binding site" evidence="1">
    <location>
        <position position="35"/>
    </location>
    <ligand>
        <name>NADPH</name>
        <dbReference type="ChEBI" id="CHEBI:57783"/>
    </ligand>
</feature>
<feature type="binding site" evidence="1">
    <location>
        <position position="107"/>
    </location>
    <ligand>
        <name>NADPH</name>
        <dbReference type="ChEBI" id="CHEBI:57783"/>
    </ligand>
</feature>
<feature type="binding site" evidence="1">
    <location>
        <position position="107"/>
    </location>
    <ligand>
        <name>sn-glycerol 3-phosphate</name>
        <dbReference type="ChEBI" id="CHEBI:57597"/>
    </ligand>
</feature>
<feature type="binding site" evidence="1">
    <location>
        <position position="135"/>
    </location>
    <ligand>
        <name>sn-glycerol 3-phosphate</name>
        <dbReference type="ChEBI" id="CHEBI:57597"/>
    </ligand>
</feature>
<feature type="binding site" evidence="1">
    <location>
        <position position="137"/>
    </location>
    <ligand>
        <name>sn-glycerol 3-phosphate</name>
        <dbReference type="ChEBI" id="CHEBI:57597"/>
    </ligand>
</feature>
<feature type="binding site" evidence="1">
    <location>
        <position position="139"/>
    </location>
    <ligand>
        <name>NADPH</name>
        <dbReference type="ChEBI" id="CHEBI:57783"/>
    </ligand>
</feature>
<feature type="binding site" evidence="1">
    <location>
        <position position="190"/>
    </location>
    <ligand>
        <name>sn-glycerol 3-phosphate</name>
        <dbReference type="ChEBI" id="CHEBI:57597"/>
    </ligand>
</feature>
<feature type="binding site" evidence="1">
    <location>
        <position position="243"/>
    </location>
    <ligand>
        <name>sn-glycerol 3-phosphate</name>
        <dbReference type="ChEBI" id="CHEBI:57597"/>
    </ligand>
</feature>
<feature type="binding site" evidence="1">
    <location>
        <position position="253"/>
    </location>
    <ligand>
        <name>sn-glycerol 3-phosphate</name>
        <dbReference type="ChEBI" id="CHEBI:57597"/>
    </ligand>
</feature>
<feature type="binding site" evidence="1">
    <location>
        <position position="254"/>
    </location>
    <ligand>
        <name>NADPH</name>
        <dbReference type="ChEBI" id="CHEBI:57783"/>
    </ligand>
</feature>
<feature type="binding site" evidence="1">
    <location>
        <position position="254"/>
    </location>
    <ligand>
        <name>sn-glycerol 3-phosphate</name>
        <dbReference type="ChEBI" id="CHEBI:57597"/>
    </ligand>
</feature>
<feature type="binding site" evidence="1">
    <location>
        <position position="255"/>
    </location>
    <ligand>
        <name>sn-glycerol 3-phosphate</name>
        <dbReference type="ChEBI" id="CHEBI:57597"/>
    </ligand>
</feature>
<feature type="binding site" evidence="1">
    <location>
        <position position="272"/>
    </location>
    <ligand>
        <name>NADPH</name>
        <dbReference type="ChEBI" id="CHEBI:57783"/>
    </ligand>
</feature>
<feature type="binding site" evidence="1">
    <location>
        <position position="274"/>
    </location>
    <ligand>
        <name>NADPH</name>
        <dbReference type="ChEBI" id="CHEBI:57783"/>
    </ligand>
</feature>
<proteinExistence type="inferred from homology"/>
<protein>
    <recommendedName>
        <fullName evidence="1">Glycerol-3-phosphate dehydrogenase [NAD(P)+]</fullName>
        <ecNumber evidence="1">1.1.1.94</ecNumber>
    </recommendedName>
    <alternativeName>
        <fullName evidence="1">NAD(P)(+)-dependent glycerol-3-phosphate dehydrogenase</fullName>
    </alternativeName>
    <alternativeName>
        <fullName evidence="1">NAD(P)H-dependent dihydroxyacetone-phosphate reductase</fullName>
    </alternativeName>
</protein>
<reference key="1">
    <citation type="journal article" date="2008" name="J. Bacteriol.">
        <title>Genome sequence of the chemolithoautotrophic bacterium Oligotropha carboxidovorans OM5T.</title>
        <authorList>
            <person name="Paul D."/>
            <person name="Bridges S."/>
            <person name="Burgess S.C."/>
            <person name="Dandass Y."/>
            <person name="Lawrence M.L."/>
        </authorList>
    </citation>
    <scope>NUCLEOTIDE SEQUENCE [LARGE SCALE GENOMIC DNA]</scope>
    <source>
        <strain>ATCC 49405 / DSM 1227 / KCTC 32145 / OM5</strain>
    </source>
</reference>
<reference key="2">
    <citation type="journal article" date="2011" name="J. Bacteriol.">
        <title>Complete genome sequences of the chemolithoautotrophic Oligotropha carboxidovorans strains OM4 and OM5.</title>
        <authorList>
            <person name="Volland S."/>
            <person name="Rachinger M."/>
            <person name="Strittmatter A."/>
            <person name="Daniel R."/>
            <person name="Gottschalk G."/>
            <person name="Meyer O."/>
        </authorList>
    </citation>
    <scope>NUCLEOTIDE SEQUENCE [LARGE SCALE GENOMIC DNA]</scope>
    <source>
        <strain>ATCC 49405 / DSM 1227 / KCTC 32145 / OM5</strain>
    </source>
</reference>
<organism>
    <name type="scientific">Afipia carboxidovorans (strain ATCC 49405 / DSM 1227 / KCTC 32145 / OM5)</name>
    <name type="common">Oligotropha carboxidovorans</name>
    <dbReference type="NCBI Taxonomy" id="504832"/>
    <lineage>
        <taxon>Bacteria</taxon>
        <taxon>Pseudomonadati</taxon>
        <taxon>Pseudomonadota</taxon>
        <taxon>Alphaproteobacteria</taxon>
        <taxon>Hyphomicrobiales</taxon>
        <taxon>Nitrobacteraceae</taxon>
        <taxon>Afipia</taxon>
    </lineage>
</organism>
<sequence length="325" mass="33130">MTTFNTISVIGAGAWGTALANACARAGRQVTLYGRSTDVLAAIAARGENPRLPGITLEKSIRVTHDLAESAKADALLLVTPTQSLREAMIALAPHVADATPLVICAKGIERGTRKFVTEIATEVLPQTRPAILSGPSFAADVARGLPTAVTLAAAEEPLAVALTHALGSSSLRPYHTTDVRGVEIGGAVKNVLAIAAGIAAGKALGASALAALTTRSFAELMRFGLACGAHRETIAGLSGLGDLILTCSSAQSRNFTFGMALGRGEAPPGSLSEGQSTAPVLIEIARAQAIEMPVAEAVANVLAGAITVNEGIEMLLARPFRAEG</sequence>
<keyword id="KW-0963">Cytoplasm</keyword>
<keyword id="KW-0444">Lipid biosynthesis</keyword>
<keyword id="KW-0443">Lipid metabolism</keyword>
<keyword id="KW-0520">NAD</keyword>
<keyword id="KW-0521">NADP</keyword>
<keyword id="KW-0547">Nucleotide-binding</keyword>
<keyword id="KW-0560">Oxidoreductase</keyword>
<keyword id="KW-0594">Phospholipid biosynthesis</keyword>
<keyword id="KW-1208">Phospholipid metabolism</keyword>
<keyword id="KW-1185">Reference proteome</keyword>
<accession>B6JAF0</accession>
<accession>F8BSQ1</accession>
<dbReference type="EC" id="1.1.1.94" evidence="1"/>
<dbReference type="EMBL" id="CP001196">
    <property type="protein sequence ID" value="ACI91475.1"/>
    <property type="molecule type" value="Genomic_DNA"/>
</dbReference>
<dbReference type="EMBL" id="CP002826">
    <property type="protein sequence ID" value="AEI04928.1"/>
    <property type="molecule type" value="Genomic_DNA"/>
</dbReference>
<dbReference type="RefSeq" id="WP_012561506.1">
    <property type="nucleotide sequence ID" value="NC_015684.1"/>
</dbReference>
<dbReference type="SMR" id="B6JAF0"/>
<dbReference type="STRING" id="504832.OCA5_c01970"/>
<dbReference type="KEGG" id="oca:OCAR_4328"/>
<dbReference type="KEGG" id="ocg:OCA5_c01970"/>
<dbReference type="PATRIC" id="fig|504832.7.peg.209"/>
<dbReference type="eggNOG" id="COG0240">
    <property type="taxonomic scope" value="Bacteria"/>
</dbReference>
<dbReference type="HOGENOM" id="CLU_033449_0_2_5"/>
<dbReference type="OrthoDB" id="9812273at2"/>
<dbReference type="UniPathway" id="UPA00940"/>
<dbReference type="Proteomes" id="UP000007730">
    <property type="component" value="Chromosome"/>
</dbReference>
<dbReference type="GO" id="GO:0005829">
    <property type="term" value="C:cytosol"/>
    <property type="evidence" value="ECO:0007669"/>
    <property type="project" value="TreeGrafter"/>
</dbReference>
<dbReference type="GO" id="GO:0047952">
    <property type="term" value="F:glycerol-3-phosphate dehydrogenase [NAD(P)+] activity"/>
    <property type="evidence" value="ECO:0007669"/>
    <property type="project" value="UniProtKB-UniRule"/>
</dbReference>
<dbReference type="GO" id="GO:0051287">
    <property type="term" value="F:NAD binding"/>
    <property type="evidence" value="ECO:0007669"/>
    <property type="project" value="InterPro"/>
</dbReference>
<dbReference type="GO" id="GO:0005975">
    <property type="term" value="P:carbohydrate metabolic process"/>
    <property type="evidence" value="ECO:0007669"/>
    <property type="project" value="InterPro"/>
</dbReference>
<dbReference type="GO" id="GO:0046167">
    <property type="term" value="P:glycerol-3-phosphate biosynthetic process"/>
    <property type="evidence" value="ECO:0007669"/>
    <property type="project" value="UniProtKB-UniRule"/>
</dbReference>
<dbReference type="GO" id="GO:0046168">
    <property type="term" value="P:glycerol-3-phosphate catabolic process"/>
    <property type="evidence" value="ECO:0007669"/>
    <property type="project" value="InterPro"/>
</dbReference>
<dbReference type="GO" id="GO:0006650">
    <property type="term" value="P:glycerophospholipid metabolic process"/>
    <property type="evidence" value="ECO:0007669"/>
    <property type="project" value="UniProtKB-UniRule"/>
</dbReference>
<dbReference type="GO" id="GO:0008654">
    <property type="term" value="P:phospholipid biosynthetic process"/>
    <property type="evidence" value="ECO:0007669"/>
    <property type="project" value="UniProtKB-KW"/>
</dbReference>
<dbReference type="FunFam" id="3.40.50.720:FF:000019">
    <property type="entry name" value="Glycerol-3-phosphate dehydrogenase [NAD(P)+]"/>
    <property type="match status" value="1"/>
</dbReference>
<dbReference type="Gene3D" id="1.10.1040.10">
    <property type="entry name" value="N-(1-d-carboxylethyl)-l-norvaline Dehydrogenase, domain 2"/>
    <property type="match status" value="1"/>
</dbReference>
<dbReference type="Gene3D" id="3.40.50.720">
    <property type="entry name" value="NAD(P)-binding Rossmann-like Domain"/>
    <property type="match status" value="1"/>
</dbReference>
<dbReference type="HAMAP" id="MF_00394">
    <property type="entry name" value="NAD_Glyc3P_dehydrog"/>
    <property type="match status" value="1"/>
</dbReference>
<dbReference type="InterPro" id="IPR008927">
    <property type="entry name" value="6-PGluconate_DH-like_C_sf"/>
</dbReference>
<dbReference type="InterPro" id="IPR013328">
    <property type="entry name" value="6PGD_dom2"/>
</dbReference>
<dbReference type="InterPro" id="IPR006168">
    <property type="entry name" value="G3P_DH_NAD-dep"/>
</dbReference>
<dbReference type="InterPro" id="IPR006109">
    <property type="entry name" value="G3P_DH_NAD-dep_C"/>
</dbReference>
<dbReference type="InterPro" id="IPR011128">
    <property type="entry name" value="G3P_DH_NAD-dep_N"/>
</dbReference>
<dbReference type="InterPro" id="IPR036291">
    <property type="entry name" value="NAD(P)-bd_dom_sf"/>
</dbReference>
<dbReference type="NCBIfam" id="NF000940">
    <property type="entry name" value="PRK00094.1-2"/>
    <property type="match status" value="1"/>
</dbReference>
<dbReference type="NCBIfam" id="NF000942">
    <property type="entry name" value="PRK00094.1-4"/>
    <property type="match status" value="1"/>
</dbReference>
<dbReference type="PANTHER" id="PTHR11728">
    <property type="entry name" value="GLYCEROL-3-PHOSPHATE DEHYDROGENASE"/>
    <property type="match status" value="1"/>
</dbReference>
<dbReference type="PANTHER" id="PTHR11728:SF1">
    <property type="entry name" value="GLYCEROL-3-PHOSPHATE DEHYDROGENASE [NAD(+)] 2, CHLOROPLASTIC"/>
    <property type="match status" value="1"/>
</dbReference>
<dbReference type="Pfam" id="PF07479">
    <property type="entry name" value="NAD_Gly3P_dh_C"/>
    <property type="match status" value="1"/>
</dbReference>
<dbReference type="Pfam" id="PF01210">
    <property type="entry name" value="NAD_Gly3P_dh_N"/>
    <property type="match status" value="1"/>
</dbReference>
<dbReference type="PIRSF" id="PIRSF000114">
    <property type="entry name" value="Glycerol-3-P_dh"/>
    <property type="match status" value="1"/>
</dbReference>
<dbReference type="PRINTS" id="PR00077">
    <property type="entry name" value="GPDHDRGNASE"/>
</dbReference>
<dbReference type="SUPFAM" id="SSF48179">
    <property type="entry name" value="6-phosphogluconate dehydrogenase C-terminal domain-like"/>
    <property type="match status" value="1"/>
</dbReference>
<dbReference type="SUPFAM" id="SSF51735">
    <property type="entry name" value="NAD(P)-binding Rossmann-fold domains"/>
    <property type="match status" value="1"/>
</dbReference>
<dbReference type="PROSITE" id="PS00957">
    <property type="entry name" value="NAD_G3PDH"/>
    <property type="match status" value="1"/>
</dbReference>
<evidence type="ECO:0000255" key="1">
    <source>
        <dbReference type="HAMAP-Rule" id="MF_00394"/>
    </source>
</evidence>
<name>GPDA_AFIC5</name>